<evidence type="ECO:0000255" key="1">
    <source>
        <dbReference type="HAMAP-Rule" id="MF_00676"/>
    </source>
</evidence>
<name>Y1301_PSEP1</name>
<comment type="similarity">
    <text evidence="1">Belongs to the UPF0260 family.</text>
</comment>
<dbReference type="EMBL" id="CP000712">
    <property type="protein sequence ID" value="ABQ77462.1"/>
    <property type="molecule type" value="Genomic_DNA"/>
</dbReference>
<dbReference type="KEGG" id="ppf:Pput_1301"/>
<dbReference type="eggNOG" id="COG2983">
    <property type="taxonomic scope" value="Bacteria"/>
</dbReference>
<dbReference type="HOGENOM" id="CLU_109769_1_0_6"/>
<dbReference type="HAMAP" id="MF_00676">
    <property type="entry name" value="UPF0260"/>
    <property type="match status" value="1"/>
</dbReference>
<dbReference type="InterPro" id="IPR005358">
    <property type="entry name" value="Puta_zinc/iron-chelating_dom"/>
</dbReference>
<dbReference type="InterPro" id="IPR008228">
    <property type="entry name" value="UCP006173"/>
</dbReference>
<dbReference type="NCBIfam" id="NF003501">
    <property type="entry name" value="PRK05170.1-5"/>
    <property type="match status" value="1"/>
</dbReference>
<dbReference type="NCBIfam" id="NF003502">
    <property type="entry name" value="PRK05170.1-6"/>
    <property type="match status" value="1"/>
</dbReference>
<dbReference type="NCBIfam" id="NF003507">
    <property type="entry name" value="PRK05170.2-5"/>
    <property type="match status" value="1"/>
</dbReference>
<dbReference type="PANTHER" id="PTHR37421">
    <property type="entry name" value="UPF0260 PROTEIN YCGN"/>
    <property type="match status" value="1"/>
</dbReference>
<dbReference type="PANTHER" id="PTHR37421:SF1">
    <property type="entry name" value="UPF0260 PROTEIN YCGN"/>
    <property type="match status" value="1"/>
</dbReference>
<dbReference type="Pfam" id="PF03692">
    <property type="entry name" value="CxxCxxCC"/>
    <property type="match status" value="1"/>
</dbReference>
<dbReference type="PIRSF" id="PIRSF006173">
    <property type="entry name" value="UCP006173"/>
    <property type="match status" value="1"/>
</dbReference>
<gene>
    <name type="ordered locus">Pput_1301</name>
</gene>
<accession>A5W002</accession>
<organism>
    <name type="scientific">Pseudomonas putida (strain ATCC 700007 / DSM 6899 / JCM 31910 / BCRC 17059 / LMG 24140 / F1)</name>
    <dbReference type="NCBI Taxonomy" id="351746"/>
    <lineage>
        <taxon>Bacteria</taxon>
        <taxon>Pseudomonadati</taxon>
        <taxon>Pseudomonadota</taxon>
        <taxon>Gammaproteobacteria</taxon>
        <taxon>Pseudomonadales</taxon>
        <taxon>Pseudomonadaceae</taxon>
        <taxon>Pseudomonas</taxon>
    </lineage>
</organism>
<feature type="chain" id="PRO_1000061961" description="UPF0260 protein Pput_1301">
    <location>
        <begin position="1"/>
        <end position="149"/>
    </location>
</feature>
<protein>
    <recommendedName>
        <fullName evidence="1">UPF0260 protein Pput_1301</fullName>
    </recommendedName>
</protein>
<reference key="1">
    <citation type="submission" date="2007-05" db="EMBL/GenBank/DDBJ databases">
        <title>Complete sequence of Pseudomonas putida F1.</title>
        <authorList>
            <consortium name="US DOE Joint Genome Institute"/>
            <person name="Copeland A."/>
            <person name="Lucas S."/>
            <person name="Lapidus A."/>
            <person name="Barry K."/>
            <person name="Detter J.C."/>
            <person name="Glavina del Rio T."/>
            <person name="Hammon N."/>
            <person name="Israni S."/>
            <person name="Dalin E."/>
            <person name="Tice H."/>
            <person name="Pitluck S."/>
            <person name="Chain P."/>
            <person name="Malfatti S."/>
            <person name="Shin M."/>
            <person name="Vergez L."/>
            <person name="Schmutz J."/>
            <person name="Larimer F."/>
            <person name="Land M."/>
            <person name="Hauser L."/>
            <person name="Kyrpides N."/>
            <person name="Lykidis A."/>
            <person name="Parales R."/>
            <person name="Richardson P."/>
        </authorList>
    </citation>
    <scope>NUCLEOTIDE SEQUENCE [LARGE SCALE GENOMIC DNA]</scope>
    <source>
        <strain>ATCC 700007 / DSM 6899 / JCM 31910 / BCRC 17059 / LMG 24140 / F1</strain>
    </source>
</reference>
<proteinExistence type="inferred from homology"/>
<sequence length="149" mass="17344">MIAENAPFWRRKTLEQLSQQEWESLCDGCGLCCLQKLEDEDDNSVYYTRIACKLLDLDTCQCSDYPNRFAHVPDCIQLTPGKADQFKWLPSTCGYRLVSEGKDLPAWHHLVCGDRQQVHEQRISQSGRMLSEHDVHEDDWEDHLIFRAS</sequence>